<organism>
    <name type="scientific">Bos taurus</name>
    <name type="common">Bovine</name>
    <dbReference type="NCBI Taxonomy" id="9913"/>
    <lineage>
        <taxon>Eukaryota</taxon>
        <taxon>Metazoa</taxon>
        <taxon>Chordata</taxon>
        <taxon>Craniata</taxon>
        <taxon>Vertebrata</taxon>
        <taxon>Euteleostomi</taxon>
        <taxon>Mammalia</taxon>
        <taxon>Eutheria</taxon>
        <taxon>Laurasiatheria</taxon>
        <taxon>Artiodactyla</taxon>
        <taxon>Ruminantia</taxon>
        <taxon>Pecora</taxon>
        <taxon>Bovidae</taxon>
        <taxon>Bovinae</taxon>
        <taxon>Bos</taxon>
    </lineage>
</organism>
<keyword id="KW-0158">Chromosome</keyword>
<keyword id="KW-0963">Cytoplasm</keyword>
<keyword id="KW-0206">Cytoskeleton</keyword>
<keyword id="KW-0333">Golgi apparatus</keyword>
<keyword id="KW-0446">Lipid-binding</keyword>
<keyword id="KW-0539">Nucleus</keyword>
<keyword id="KW-0597">Phosphoprotein</keyword>
<keyword id="KW-1185">Reference proteome</keyword>
<reference key="1">
    <citation type="submission" date="2005-08" db="EMBL/GenBank/DDBJ databases">
        <authorList>
            <consortium name="NIH - Mammalian Gene Collection (MGC) project"/>
        </authorList>
    </citation>
    <scope>NUCLEOTIDE SEQUENCE [LARGE SCALE MRNA]</scope>
    <source>
        <strain>Crossbred X Angus</strain>
        <tissue>Ileum</tissue>
    </source>
</reference>
<gene>
    <name type="primary">NSFL1C</name>
</gene>
<accession>Q3SZC4</accession>
<dbReference type="EMBL" id="BC102956">
    <property type="protein sequence ID" value="AAI02957.1"/>
    <property type="molecule type" value="mRNA"/>
</dbReference>
<dbReference type="RefSeq" id="NP_001029729.1">
    <property type="nucleotide sequence ID" value="NM_001034557.2"/>
</dbReference>
<dbReference type="BMRB" id="Q3SZC4"/>
<dbReference type="SMR" id="Q3SZC4"/>
<dbReference type="FunCoup" id="Q3SZC4">
    <property type="interactions" value="4492"/>
</dbReference>
<dbReference type="STRING" id="9913.ENSBTAP00000008580"/>
<dbReference type="PaxDb" id="9913-ENSBTAP00000008580"/>
<dbReference type="PeptideAtlas" id="Q3SZC4"/>
<dbReference type="Ensembl" id="ENSBTAT00000008580.7">
    <property type="protein sequence ID" value="ENSBTAP00000008580.5"/>
    <property type="gene ID" value="ENSBTAG00000006533.7"/>
</dbReference>
<dbReference type="GeneID" id="526612"/>
<dbReference type="KEGG" id="bta:526612"/>
<dbReference type="CTD" id="55968"/>
<dbReference type="VEuPathDB" id="HostDB:ENSBTAG00000006533"/>
<dbReference type="VGNC" id="VGNC:32275">
    <property type="gene designation" value="NSFL1C"/>
</dbReference>
<dbReference type="eggNOG" id="KOG2086">
    <property type="taxonomic scope" value="Eukaryota"/>
</dbReference>
<dbReference type="GeneTree" id="ENSGT00520000055567"/>
<dbReference type="HOGENOM" id="CLU_029402_0_0_1"/>
<dbReference type="InParanoid" id="Q3SZC4"/>
<dbReference type="OMA" id="NKDHTDK"/>
<dbReference type="OrthoDB" id="25887at2759"/>
<dbReference type="TreeFam" id="TF312973"/>
<dbReference type="Reactome" id="R-BTA-9013407">
    <property type="pathway name" value="RHOH GTPase cycle"/>
</dbReference>
<dbReference type="Proteomes" id="UP000009136">
    <property type="component" value="Chromosome 13"/>
</dbReference>
<dbReference type="Bgee" id="ENSBTAG00000006533">
    <property type="expression patterns" value="Expressed in laryngeal cartilage and 104 other cell types or tissues"/>
</dbReference>
<dbReference type="GO" id="GO:0005813">
    <property type="term" value="C:centrosome"/>
    <property type="evidence" value="ECO:0007669"/>
    <property type="project" value="UniProtKB-SubCell"/>
</dbReference>
<dbReference type="GO" id="GO:0005694">
    <property type="term" value="C:chromosome"/>
    <property type="evidence" value="ECO:0007669"/>
    <property type="project" value="UniProtKB-SubCell"/>
</dbReference>
<dbReference type="GO" id="GO:0005829">
    <property type="term" value="C:cytosol"/>
    <property type="evidence" value="ECO:0000318"/>
    <property type="project" value="GO_Central"/>
</dbReference>
<dbReference type="GO" id="GO:0005795">
    <property type="term" value="C:Golgi stack"/>
    <property type="evidence" value="ECO:0007669"/>
    <property type="project" value="UniProtKB-SubCell"/>
</dbReference>
<dbReference type="GO" id="GO:0005634">
    <property type="term" value="C:nucleus"/>
    <property type="evidence" value="ECO:0000318"/>
    <property type="project" value="GO_Central"/>
</dbReference>
<dbReference type="GO" id="GO:1990730">
    <property type="term" value="C:VCP-NSFL1C complex"/>
    <property type="evidence" value="ECO:0007669"/>
    <property type="project" value="Ensembl"/>
</dbReference>
<dbReference type="GO" id="GO:0008289">
    <property type="term" value="F:lipid binding"/>
    <property type="evidence" value="ECO:0007669"/>
    <property type="project" value="UniProtKB-KW"/>
</dbReference>
<dbReference type="GO" id="GO:0043130">
    <property type="term" value="F:ubiquitin binding"/>
    <property type="evidence" value="ECO:0000318"/>
    <property type="project" value="GO_Central"/>
</dbReference>
<dbReference type="GO" id="GO:0000045">
    <property type="term" value="P:autophagosome assembly"/>
    <property type="evidence" value="ECO:0000318"/>
    <property type="project" value="GO_Central"/>
</dbReference>
<dbReference type="GO" id="GO:0000132">
    <property type="term" value="P:establishment of mitotic spindle orientation"/>
    <property type="evidence" value="ECO:0007669"/>
    <property type="project" value="Ensembl"/>
</dbReference>
<dbReference type="GO" id="GO:0007030">
    <property type="term" value="P:Golgi organization"/>
    <property type="evidence" value="ECO:0000318"/>
    <property type="project" value="GO_Central"/>
</dbReference>
<dbReference type="GO" id="GO:0061025">
    <property type="term" value="P:membrane fusion"/>
    <property type="evidence" value="ECO:0000318"/>
    <property type="project" value="GO_Central"/>
</dbReference>
<dbReference type="GO" id="GO:1904780">
    <property type="term" value="P:negative regulation of protein localization to centrosome"/>
    <property type="evidence" value="ECO:0007669"/>
    <property type="project" value="Ensembl"/>
</dbReference>
<dbReference type="GO" id="GO:0031468">
    <property type="term" value="P:nuclear membrane reassembly"/>
    <property type="evidence" value="ECO:0000318"/>
    <property type="project" value="GO_Central"/>
</dbReference>
<dbReference type="GO" id="GO:0046604">
    <property type="term" value="P:positive regulation of mitotic centrosome separation"/>
    <property type="evidence" value="ECO:0007669"/>
    <property type="project" value="Ensembl"/>
</dbReference>
<dbReference type="GO" id="GO:0043161">
    <property type="term" value="P:proteasome-mediated ubiquitin-dependent protein catabolic process"/>
    <property type="evidence" value="ECO:0000318"/>
    <property type="project" value="GO_Central"/>
</dbReference>
<dbReference type="CDD" id="cd14348">
    <property type="entry name" value="UBA_p47"/>
    <property type="match status" value="1"/>
</dbReference>
<dbReference type="CDD" id="cd17162">
    <property type="entry name" value="UBX_UBXN2C"/>
    <property type="match status" value="1"/>
</dbReference>
<dbReference type="FunFam" id="3.10.20.90:FF:000093">
    <property type="entry name" value="NSFL1 (P97) cofactor (P47)"/>
    <property type="match status" value="1"/>
</dbReference>
<dbReference type="FunFam" id="3.30.420.210:FF:000001">
    <property type="entry name" value="NSFL1 (P97) cofactor (P47)"/>
    <property type="match status" value="1"/>
</dbReference>
<dbReference type="FunFam" id="1.10.8.10:FF:000020">
    <property type="entry name" value="NSFL1 (p97) cofactor (p47)"/>
    <property type="match status" value="1"/>
</dbReference>
<dbReference type="Gene3D" id="1.10.8.10">
    <property type="entry name" value="DNA helicase RuvA subunit, C-terminal domain"/>
    <property type="match status" value="1"/>
</dbReference>
<dbReference type="Gene3D" id="3.10.20.90">
    <property type="entry name" value="Phosphatidylinositol 3-kinase Catalytic Subunit, Chain A, domain 1"/>
    <property type="match status" value="1"/>
</dbReference>
<dbReference type="Gene3D" id="3.30.420.210">
    <property type="entry name" value="SEP domain"/>
    <property type="match status" value="1"/>
</dbReference>
<dbReference type="InterPro" id="IPR036241">
    <property type="entry name" value="NSFL1C_SEP_dom_sf"/>
</dbReference>
<dbReference type="InterPro" id="IPR012989">
    <property type="entry name" value="SEP_domain"/>
</dbReference>
<dbReference type="InterPro" id="IPR009060">
    <property type="entry name" value="UBA-like_sf"/>
</dbReference>
<dbReference type="InterPro" id="IPR029071">
    <property type="entry name" value="Ubiquitin-like_domsf"/>
</dbReference>
<dbReference type="InterPro" id="IPR001012">
    <property type="entry name" value="UBX_dom"/>
</dbReference>
<dbReference type="PANTHER" id="PTHR23333:SF24">
    <property type="entry name" value="NSFL1 COFACTOR P47"/>
    <property type="match status" value="1"/>
</dbReference>
<dbReference type="PANTHER" id="PTHR23333">
    <property type="entry name" value="UBX DOMAIN CONTAINING PROTEIN"/>
    <property type="match status" value="1"/>
</dbReference>
<dbReference type="Pfam" id="PF08059">
    <property type="entry name" value="SEP"/>
    <property type="match status" value="1"/>
</dbReference>
<dbReference type="Pfam" id="PF14555">
    <property type="entry name" value="UBA_4"/>
    <property type="match status" value="1"/>
</dbReference>
<dbReference type="Pfam" id="PF00789">
    <property type="entry name" value="UBX"/>
    <property type="match status" value="1"/>
</dbReference>
<dbReference type="SMART" id="SM00553">
    <property type="entry name" value="SEP"/>
    <property type="match status" value="1"/>
</dbReference>
<dbReference type="SMART" id="SM00166">
    <property type="entry name" value="UBX"/>
    <property type="match status" value="1"/>
</dbReference>
<dbReference type="SUPFAM" id="SSF102848">
    <property type="entry name" value="NSFL1 (p97 ATPase) cofactor p47, SEP domain"/>
    <property type="match status" value="1"/>
</dbReference>
<dbReference type="SUPFAM" id="SSF46934">
    <property type="entry name" value="UBA-like"/>
    <property type="match status" value="1"/>
</dbReference>
<dbReference type="SUPFAM" id="SSF54236">
    <property type="entry name" value="Ubiquitin-like"/>
    <property type="match status" value="1"/>
</dbReference>
<dbReference type="PROSITE" id="PS51399">
    <property type="entry name" value="SEP"/>
    <property type="match status" value="1"/>
</dbReference>
<dbReference type="PROSITE" id="PS50033">
    <property type="entry name" value="UBX"/>
    <property type="match status" value="1"/>
</dbReference>
<feature type="chain" id="PRO_0000304737" description="NSFL1 cofactor p47">
    <location>
        <begin position="1"/>
        <end position="370"/>
    </location>
</feature>
<feature type="domain" description="SEP" evidence="6">
    <location>
        <begin position="179"/>
        <end position="244"/>
    </location>
</feature>
<feature type="domain" description="UBX" evidence="5">
    <location>
        <begin position="291"/>
        <end position="368"/>
    </location>
</feature>
<feature type="region of interest" description="Disordered" evidence="7">
    <location>
        <begin position="54"/>
        <end position="73"/>
    </location>
</feature>
<feature type="region of interest" description="Disordered" evidence="7">
    <location>
        <begin position="80"/>
        <end position="116"/>
    </location>
</feature>
<feature type="region of interest" description="Disordered" evidence="7">
    <location>
        <begin position="137"/>
        <end position="157"/>
    </location>
</feature>
<feature type="region of interest" description="Disordered" evidence="7">
    <location>
        <begin position="272"/>
        <end position="292"/>
    </location>
</feature>
<feature type="short sequence motif" description="Nuclear localization signal">
    <location>
        <begin position="109"/>
        <end position="115"/>
    </location>
</feature>
<feature type="short sequence motif" description="Nuclear localization signal">
    <location>
        <begin position="172"/>
        <end position="175"/>
    </location>
</feature>
<feature type="modified residue" description="Phosphoserine" evidence="4">
    <location>
        <position position="74"/>
    </location>
</feature>
<feature type="modified residue" description="Phosphoserine" evidence="4">
    <location>
        <position position="102"/>
    </location>
</feature>
<feature type="modified residue" description="Phosphoserine" evidence="4">
    <location>
        <position position="114"/>
    </location>
</feature>
<feature type="modified residue" description="Phosphoserine; by CDK1" evidence="2">
    <location>
        <position position="140"/>
    </location>
</feature>
<feature type="modified residue" description="Phosphotyrosine" evidence="3">
    <location>
        <position position="167"/>
    </location>
</feature>
<feature type="modified residue" description="Phosphoserine" evidence="3">
    <location>
        <position position="176"/>
    </location>
</feature>
<feature type="modified residue" description="Phosphoserine" evidence="4">
    <location>
        <position position="192"/>
    </location>
</feature>
<feature type="modified residue" description="Phosphoserine" evidence="4">
    <location>
        <position position="272"/>
    </location>
</feature>
<protein>
    <recommendedName>
        <fullName>NSFL1 cofactor p47</fullName>
    </recommendedName>
    <alternativeName>
        <fullName>p97 cofactor p47</fullName>
    </alternativeName>
</protein>
<sequence>MAAERQDALREFVAVTGAEEDRARFFLESAGWDLQIALASFYEDGGDEDIVTISQATPSSVSRGTAPSDNRVTSFRDLIHDQDEDEEEEEGQRFYAGGSERSGQQIVGPPRKRSPNELVDDLFKGAKEHGAVAVERVTKSPGETSKPRPFAGGGYRLGAAPEEESAYVAGERRRHSGQDVHVVLKLWKTGFSLDNGELRSYQDPSNAQFLESIRRGEVPAELRRLAHGGQVNLDMEDHRDEDFVKPKGAFKAFTGEGQKLGSTAPQILNTSSPAQQAENEAKASSSISIDESQPTTNIQIRLADGGRLVQKFNHSHRISDIRLFIVDARPAMAATSFVLMTTFPNKELADENQTLKEANLLNAVIVQRLT</sequence>
<comment type="function">
    <text evidence="2 4">Reduces the ATPase activity of VCP. Necessary for the fragmentation of Golgi stacks during mitosis and for VCP-mediated reassembly of Golgi stacks after mitosis. May play a role in VCP-mediated formation of transitional endoplasmic reticulum (tER). Inhibits the activity of CTSL (in vitro). Together with UBXN2B/p37, regulates the centrosomal levels of kinase AURKA/Aurora A during mitotic progression by promoting AURKA removal from centrosomes in prophase. Also, regulates spindle orientation during mitosis.</text>
</comment>
<comment type="subunit">
    <text evidence="1">Part of a ternary complex containing STX5A, NSFL1C and VCP. NSFL1C forms a homotrimer that binds to one end of a VCP homohexamer. The complex binds to membranes enriched in phosphatidylethanolamine-containing lipids and promotes Golgi membrane fusion. Interaction with VCIP135 leads to dissociation of the complex via ATP hydrolysis by VCP. Binds ubiquitin and mono-ubiquitinated proteins via its N-terminal UBA-like domain when bound to VCP (By similarity).</text>
</comment>
<comment type="subcellular location">
    <subcellularLocation>
        <location evidence="2">Nucleus</location>
    </subcellularLocation>
    <subcellularLocation>
        <location evidence="2">Golgi apparatus</location>
        <location evidence="2">Golgi stack</location>
    </subcellularLocation>
    <subcellularLocation>
        <location evidence="2">Chromosome</location>
    </subcellularLocation>
    <subcellularLocation>
        <location evidence="2">Cytoplasm</location>
        <location evidence="2">Cytoskeleton</location>
        <location evidence="2">Microtubule organizing center</location>
        <location evidence="2">Centrosome</location>
    </subcellularLocation>
    <text evidence="2">Predominantly nuclear in interphase cells. Bound to the axial elements of sex chromosomes in pachytene spermatocytes. A small proportion of the protein is cytoplasmic, associated with Golgi stacks. Localizes to centrosome during mitotic prophase and metaphase.</text>
</comment>
<comment type="PTM">
    <text evidence="1">Phosphorylated during mitosis. Phosphorylation inhibits interaction with Golgi membranes and is required for the fragmentation of the Golgi stacks during mitosis (By similarity).</text>
</comment>
<name>NSF1C_BOVIN</name>
<evidence type="ECO:0000250" key="1"/>
<evidence type="ECO:0000250" key="2">
    <source>
        <dbReference type="UniProtKB" id="O35987"/>
    </source>
</evidence>
<evidence type="ECO:0000250" key="3">
    <source>
        <dbReference type="UniProtKB" id="Q9CZ44"/>
    </source>
</evidence>
<evidence type="ECO:0000250" key="4">
    <source>
        <dbReference type="UniProtKB" id="Q9UNZ2"/>
    </source>
</evidence>
<evidence type="ECO:0000255" key="5">
    <source>
        <dbReference type="PROSITE-ProRule" id="PRU00215"/>
    </source>
</evidence>
<evidence type="ECO:0000255" key="6">
    <source>
        <dbReference type="PROSITE-ProRule" id="PRU00732"/>
    </source>
</evidence>
<evidence type="ECO:0000256" key="7">
    <source>
        <dbReference type="SAM" id="MobiDB-lite"/>
    </source>
</evidence>
<proteinExistence type="evidence at transcript level"/>